<gene>
    <name evidence="1" type="primary">nagK</name>
    <name type="ordered locus">SBO_1942</name>
</gene>
<organism>
    <name type="scientific">Shigella boydii serotype 4 (strain Sb227)</name>
    <dbReference type="NCBI Taxonomy" id="300268"/>
    <lineage>
        <taxon>Bacteria</taxon>
        <taxon>Pseudomonadati</taxon>
        <taxon>Pseudomonadota</taxon>
        <taxon>Gammaproteobacteria</taxon>
        <taxon>Enterobacterales</taxon>
        <taxon>Enterobacteriaceae</taxon>
        <taxon>Shigella</taxon>
    </lineage>
</organism>
<comment type="function">
    <text evidence="1">Catalyzes the phosphorylation of N-acetyl-D-glucosamine (GlcNAc) derived from cell-wall degradation, yielding GlcNAc-6-P.</text>
</comment>
<comment type="catalytic activity">
    <reaction evidence="1">
        <text>N-acetyl-D-glucosamine + ATP = N-acetyl-D-glucosamine 6-phosphate + ADP + H(+)</text>
        <dbReference type="Rhea" id="RHEA:17417"/>
        <dbReference type="ChEBI" id="CHEBI:15378"/>
        <dbReference type="ChEBI" id="CHEBI:30616"/>
        <dbReference type="ChEBI" id="CHEBI:57513"/>
        <dbReference type="ChEBI" id="CHEBI:456216"/>
        <dbReference type="ChEBI" id="CHEBI:506227"/>
        <dbReference type="EC" id="2.7.1.59"/>
    </reaction>
</comment>
<comment type="pathway">
    <text evidence="1">Cell wall biogenesis; peptidoglycan recycling.</text>
</comment>
<comment type="similarity">
    <text evidence="1">Belongs to the ROK (NagC/XylR) family. NagK subfamily.</text>
</comment>
<reference key="1">
    <citation type="journal article" date="2005" name="Nucleic Acids Res.">
        <title>Genome dynamics and diversity of Shigella species, the etiologic agents of bacillary dysentery.</title>
        <authorList>
            <person name="Yang F."/>
            <person name="Yang J."/>
            <person name="Zhang X."/>
            <person name="Chen L."/>
            <person name="Jiang Y."/>
            <person name="Yan Y."/>
            <person name="Tang X."/>
            <person name="Wang J."/>
            <person name="Xiong Z."/>
            <person name="Dong J."/>
            <person name="Xue Y."/>
            <person name="Zhu Y."/>
            <person name="Xu X."/>
            <person name="Sun L."/>
            <person name="Chen S."/>
            <person name="Nie H."/>
            <person name="Peng J."/>
            <person name="Xu J."/>
            <person name="Wang Y."/>
            <person name="Yuan Z."/>
            <person name="Wen Y."/>
            <person name="Yao Z."/>
            <person name="Shen Y."/>
            <person name="Qiang B."/>
            <person name="Hou Y."/>
            <person name="Yu J."/>
            <person name="Jin Q."/>
        </authorList>
    </citation>
    <scope>NUCLEOTIDE SEQUENCE [LARGE SCALE GENOMIC DNA]</scope>
    <source>
        <strain>Sb227</strain>
    </source>
</reference>
<keyword id="KW-0067">ATP-binding</keyword>
<keyword id="KW-0119">Carbohydrate metabolism</keyword>
<keyword id="KW-0418">Kinase</keyword>
<keyword id="KW-0479">Metal-binding</keyword>
<keyword id="KW-0547">Nucleotide-binding</keyword>
<keyword id="KW-0808">Transferase</keyword>
<keyword id="KW-0862">Zinc</keyword>
<sequence>MYYGFDIGGTKIALGVFDSGRQLQWEKRVPTPRDSYDAFLDAVCELVAEADQRFGCRGSVGIGIPGMPETEDGTLYAANVPAASGKPLRADLSARLDRDVRLDNDANCFALSEAWDDEFTQYPLVMGLILGTGVGGGLIFNGKPITGKSYITGEFGHMRLPVDALTMMGLDFPLRRCGCGQHGCIENYLSGRGFAWLYQHYYHQQLQAPEIIALYNQGDEQARAHVERYLDLLAVSLGNILTIVDPDLVVIGGGLSNFPAITTQLADRLPCHLLPVARVPRIERARHGDAGGMRGAAFLHLTD</sequence>
<feature type="chain" id="PRO_0000270115" description="N-acetyl-D-glucosamine kinase">
    <location>
        <begin position="1"/>
        <end position="303"/>
    </location>
</feature>
<feature type="binding site" evidence="1">
    <location>
        <begin position="4"/>
        <end position="11"/>
    </location>
    <ligand>
        <name>ATP</name>
        <dbReference type="ChEBI" id="CHEBI:30616"/>
    </ligand>
</feature>
<feature type="binding site" evidence="1">
    <location>
        <begin position="133"/>
        <end position="140"/>
    </location>
    <ligand>
        <name>ATP</name>
        <dbReference type="ChEBI" id="CHEBI:30616"/>
    </ligand>
</feature>
<feature type="binding site" evidence="1">
    <location>
        <position position="157"/>
    </location>
    <ligand>
        <name>Zn(2+)</name>
        <dbReference type="ChEBI" id="CHEBI:29105"/>
    </ligand>
</feature>
<feature type="binding site" evidence="1">
    <location>
        <position position="177"/>
    </location>
    <ligand>
        <name>Zn(2+)</name>
        <dbReference type="ChEBI" id="CHEBI:29105"/>
    </ligand>
</feature>
<feature type="binding site" evidence="1">
    <location>
        <position position="179"/>
    </location>
    <ligand>
        <name>Zn(2+)</name>
        <dbReference type="ChEBI" id="CHEBI:29105"/>
    </ligand>
</feature>
<feature type="binding site" evidence="1">
    <location>
        <position position="184"/>
    </location>
    <ligand>
        <name>Zn(2+)</name>
        <dbReference type="ChEBI" id="CHEBI:29105"/>
    </ligand>
</feature>
<protein>
    <recommendedName>
        <fullName evidence="1">N-acetyl-D-glucosamine kinase</fullName>
        <ecNumber evidence="1">2.7.1.59</ecNumber>
    </recommendedName>
    <alternativeName>
        <fullName evidence="1">GlcNAc kinase</fullName>
    </alternativeName>
</protein>
<name>NAGK_SHIBS</name>
<evidence type="ECO:0000255" key="1">
    <source>
        <dbReference type="HAMAP-Rule" id="MF_01271"/>
    </source>
</evidence>
<proteinExistence type="inferred from homology"/>
<dbReference type="EC" id="2.7.1.59" evidence="1"/>
<dbReference type="EMBL" id="CP000036">
    <property type="protein sequence ID" value="ABB66532.1"/>
    <property type="molecule type" value="Genomic_DNA"/>
</dbReference>
<dbReference type="RefSeq" id="WP_000291294.1">
    <property type="nucleotide sequence ID" value="NC_007613.1"/>
</dbReference>
<dbReference type="SMR" id="Q31ZH6"/>
<dbReference type="KEGG" id="sbo:SBO_1942"/>
<dbReference type="HOGENOM" id="CLU_036604_0_3_6"/>
<dbReference type="UniPathway" id="UPA00544"/>
<dbReference type="Proteomes" id="UP000007067">
    <property type="component" value="Chromosome"/>
</dbReference>
<dbReference type="GO" id="GO:0005524">
    <property type="term" value="F:ATP binding"/>
    <property type="evidence" value="ECO:0007669"/>
    <property type="project" value="UniProtKB-UniRule"/>
</dbReference>
<dbReference type="GO" id="GO:0045127">
    <property type="term" value="F:N-acetylglucosamine kinase activity"/>
    <property type="evidence" value="ECO:0007669"/>
    <property type="project" value="UniProtKB-UniRule"/>
</dbReference>
<dbReference type="GO" id="GO:0008270">
    <property type="term" value="F:zinc ion binding"/>
    <property type="evidence" value="ECO:0007669"/>
    <property type="project" value="UniProtKB-UniRule"/>
</dbReference>
<dbReference type="GO" id="GO:0006044">
    <property type="term" value="P:N-acetylglucosamine metabolic process"/>
    <property type="evidence" value="ECO:0007669"/>
    <property type="project" value="UniProtKB-UniRule"/>
</dbReference>
<dbReference type="GO" id="GO:0009254">
    <property type="term" value="P:peptidoglycan turnover"/>
    <property type="evidence" value="ECO:0007669"/>
    <property type="project" value="UniProtKB-UniRule"/>
</dbReference>
<dbReference type="CDD" id="cd24057">
    <property type="entry name" value="ASKHA_NBD_ROK_NAGK"/>
    <property type="match status" value="1"/>
</dbReference>
<dbReference type="FunFam" id="3.30.420.40:FF:000049">
    <property type="entry name" value="N-acetyl-D-glucosamine kinase"/>
    <property type="match status" value="1"/>
</dbReference>
<dbReference type="FunFam" id="3.30.420.40:FF:000051">
    <property type="entry name" value="N-acetyl-D-glucosamine kinase"/>
    <property type="match status" value="1"/>
</dbReference>
<dbReference type="Gene3D" id="3.30.420.40">
    <property type="match status" value="2"/>
</dbReference>
<dbReference type="HAMAP" id="MF_01271">
    <property type="entry name" value="GlcNAc_kinase"/>
    <property type="match status" value="1"/>
</dbReference>
<dbReference type="InterPro" id="IPR043129">
    <property type="entry name" value="ATPase_NBD"/>
</dbReference>
<dbReference type="InterPro" id="IPR023505">
    <property type="entry name" value="N-acetyl-D-glucosamine_kinase"/>
</dbReference>
<dbReference type="InterPro" id="IPR000600">
    <property type="entry name" value="ROK"/>
</dbReference>
<dbReference type="InterPro" id="IPR049874">
    <property type="entry name" value="ROK_cs"/>
</dbReference>
<dbReference type="NCBIfam" id="NF009835">
    <property type="entry name" value="PRK13310.1"/>
    <property type="match status" value="1"/>
</dbReference>
<dbReference type="PANTHER" id="PTHR18964:SF162">
    <property type="entry name" value="N-ACETYL-D-GLUCOSAMINE KINASE"/>
    <property type="match status" value="1"/>
</dbReference>
<dbReference type="PANTHER" id="PTHR18964">
    <property type="entry name" value="ROK (REPRESSOR, ORF, KINASE) FAMILY"/>
    <property type="match status" value="1"/>
</dbReference>
<dbReference type="Pfam" id="PF00480">
    <property type="entry name" value="ROK"/>
    <property type="match status" value="1"/>
</dbReference>
<dbReference type="SUPFAM" id="SSF53067">
    <property type="entry name" value="Actin-like ATPase domain"/>
    <property type="match status" value="1"/>
</dbReference>
<dbReference type="PROSITE" id="PS01125">
    <property type="entry name" value="ROK"/>
    <property type="match status" value="1"/>
</dbReference>
<accession>Q31ZH6</accession>